<dbReference type="EC" id="3.2.2.31" evidence="19"/>
<dbReference type="EMBL" id="U63329">
    <property type="protein sequence ID" value="AAC50618.1"/>
    <property type="molecule type" value="Genomic_DNA"/>
</dbReference>
<dbReference type="EMBL" id="AB032920">
    <property type="protein sequence ID" value="BAA89336.1"/>
    <property type="molecule type" value="mRNA"/>
</dbReference>
<dbReference type="EMBL" id="AB032921">
    <property type="protein sequence ID" value="BAA89337.1"/>
    <property type="molecule type" value="mRNA"/>
</dbReference>
<dbReference type="EMBL" id="AB032922">
    <property type="protein sequence ID" value="BAA89338.1"/>
    <property type="molecule type" value="mRNA"/>
</dbReference>
<dbReference type="EMBL" id="AB032923">
    <property type="protein sequence ID" value="BAA89339.1"/>
    <property type="status" value="ALT_SEQ"/>
    <property type="molecule type" value="mRNA"/>
</dbReference>
<dbReference type="EMBL" id="AB032924">
    <property type="protein sequence ID" value="BAA89340.1"/>
    <property type="molecule type" value="mRNA"/>
</dbReference>
<dbReference type="EMBL" id="AB032925">
    <property type="protein sequence ID" value="BAA89341.1"/>
    <property type="molecule type" value="mRNA"/>
</dbReference>
<dbReference type="EMBL" id="AB032926">
    <property type="protein sequence ID" value="BAA89342.1"/>
    <property type="molecule type" value="mRNA"/>
</dbReference>
<dbReference type="EMBL" id="AB032927">
    <property type="protein sequence ID" value="BAA89343.1"/>
    <property type="molecule type" value="mRNA"/>
</dbReference>
<dbReference type="EMBL" id="AB032928">
    <property type="protein sequence ID" value="BAA89344.1"/>
    <property type="molecule type" value="mRNA"/>
</dbReference>
<dbReference type="EMBL" id="AB032929">
    <property type="protein sequence ID" value="BAA89345.1"/>
    <property type="status" value="ALT_SEQ"/>
    <property type="molecule type" value="mRNA"/>
</dbReference>
<dbReference type="EMBL" id="HQ205466">
    <property type="protein sequence ID" value="ADP90937.1"/>
    <property type="molecule type" value="Genomic_DNA"/>
</dbReference>
<dbReference type="EMBL" id="HQ205468">
    <property type="protein sequence ID" value="ADP90947.1"/>
    <property type="molecule type" value="Genomic_DNA"/>
</dbReference>
<dbReference type="EMBL" id="HQ205469">
    <property type="protein sequence ID" value="ADP90952.1"/>
    <property type="molecule type" value="Genomic_DNA"/>
</dbReference>
<dbReference type="EMBL" id="HQ205470">
    <property type="protein sequence ID" value="ADP90957.1"/>
    <property type="molecule type" value="Genomic_DNA"/>
</dbReference>
<dbReference type="EMBL" id="HQ205472">
    <property type="protein sequence ID" value="ADP90967.1"/>
    <property type="molecule type" value="Genomic_DNA"/>
</dbReference>
<dbReference type="EMBL" id="HQ205473">
    <property type="protein sequence ID" value="ADP90972.1"/>
    <property type="molecule type" value="Genomic_DNA"/>
</dbReference>
<dbReference type="EMBL" id="HQ205474">
    <property type="protein sequence ID" value="ADP90977.1"/>
    <property type="molecule type" value="Genomic_DNA"/>
</dbReference>
<dbReference type="EMBL" id="HQ205475">
    <property type="protein sequence ID" value="ADP90982.1"/>
    <property type="molecule type" value="Genomic_DNA"/>
</dbReference>
<dbReference type="EMBL" id="HQ205476">
    <property type="protein sequence ID" value="ADP90987.1"/>
    <property type="molecule type" value="Genomic_DNA"/>
</dbReference>
<dbReference type="EMBL" id="HQ205477">
    <property type="protein sequence ID" value="ADP90992.1"/>
    <property type="molecule type" value="Genomic_DNA"/>
</dbReference>
<dbReference type="EMBL" id="HQ205479">
    <property type="protein sequence ID" value="ADP91002.1"/>
    <property type="molecule type" value="Genomic_DNA"/>
</dbReference>
<dbReference type="EMBL" id="HQ205480">
    <property type="protein sequence ID" value="ADP91007.1"/>
    <property type="molecule type" value="Genomic_DNA"/>
</dbReference>
<dbReference type="EMBL" id="HQ205481">
    <property type="protein sequence ID" value="ADP91012.1"/>
    <property type="molecule type" value="Genomic_DNA"/>
</dbReference>
<dbReference type="EMBL" id="HQ205482">
    <property type="protein sequence ID" value="ADP91017.1"/>
    <property type="molecule type" value="Genomic_DNA"/>
</dbReference>
<dbReference type="EMBL" id="HQ205483">
    <property type="protein sequence ID" value="ADP91022.1"/>
    <property type="molecule type" value="Genomic_DNA"/>
</dbReference>
<dbReference type="EMBL" id="HQ205484">
    <property type="protein sequence ID" value="ADP91027.1"/>
    <property type="molecule type" value="Genomic_DNA"/>
</dbReference>
<dbReference type="EMBL" id="HQ205485">
    <property type="protein sequence ID" value="ADP91032.1"/>
    <property type="molecule type" value="Genomic_DNA"/>
</dbReference>
<dbReference type="EMBL" id="HQ205486">
    <property type="protein sequence ID" value="ADP91037.1"/>
    <property type="molecule type" value="Genomic_DNA"/>
</dbReference>
<dbReference type="EMBL" id="HQ205487">
    <property type="protein sequence ID" value="ADP91042.1"/>
    <property type="molecule type" value="Genomic_DNA"/>
</dbReference>
<dbReference type="EMBL" id="HQ205488">
    <property type="protein sequence ID" value="ADP91047.1"/>
    <property type="molecule type" value="Genomic_DNA"/>
</dbReference>
<dbReference type="EMBL" id="HQ205489">
    <property type="protein sequence ID" value="ADP91052.1"/>
    <property type="molecule type" value="Genomic_DNA"/>
</dbReference>
<dbReference type="EMBL" id="HQ205490">
    <property type="protein sequence ID" value="ADP91057.1"/>
    <property type="molecule type" value="Genomic_DNA"/>
</dbReference>
<dbReference type="EMBL" id="HQ205491">
    <property type="protein sequence ID" value="ADP91062.1"/>
    <property type="molecule type" value="Genomic_DNA"/>
</dbReference>
<dbReference type="EMBL" id="HQ205492">
    <property type="protein sequence ID" value="ADP91067.1"/>
    <property type="molecule type" value="Genomic_DNA"/>
</dbReference>
<dbReference type="EMBL" id="HQ205493">
    <property type="protein sequence ID" value="ADP91072.1"/>
    <property type="molecule type" value="Genomic_DNA"/>
</dbReference>
<dbReference type="EMBL" id="HQ205494">
    <property type="protein sequence ID" value="ADP91077.1"/>
    <property type="molecule type" value="Genomic_DNA"/>
</dbReference>
<dbReference type="EMBL" id="HQ205495">
    <property type="protein sequence ID" value="ADP91082.1"/>
    <property type="molecule type" value="Genomic_DNA"/>
</dbReference>
<dbReference type="EMBL" id="HQ205496">
    <property type="protein sequence ID" value="ADP91087.1"/>
    <property type="molecule type" value="Genomic_DNA"/>
</dbReference>
<dbReference type="EMBL" id="HQ205497">
    <property type="protein sequence ID" value="ADP91092.1"/>
    <property type="molecule type" value="Genomic_DNA"/>
</dbReference>
<dbReference type="EMBL" id="HQ205498">
    <property type="protein sequence ID" value="ADP91097.1"/>
    <property type="molecule type" value="Genomic_DNA"/>
</dbReference>
<dbReference type="EMBL" id="HQ205499">
    <property type="protein sequence ID" value="ADP91102.1"/>
    <property type="molecule type" value="Genomic_DNA"/>
</dbReference>
<dbReference type="EMBL" id="HQ205500">
    <property type="protein sequence ID" value="ADP91107.1"/>
    <property type="molecule type" value="Genomic_DNA"/>
</dbReference>
<dbReference type="EMBL" id="HQ205501">
    <property type="protein sequence ID" value="ADP91112.1"/>
    <property type="molecule type" value="Genomic_DNA"/>
</dbReference>
<dbReference type="EMBL" id="HQ205502">
    <property type="protein sequence ID" value="ADP91117.1"/>
    <property type="molecule type" value="Genomic_DNA"/>
</dbReference>
<dbReference type="EMBL" id="HQ205503">
    <property type="protein sequence ID" value="ADP91122.1"/>
    <property type="molecule type" value="Genomic_DNA"/>
</dbReference>
<dbReference type="EMBL" id="HQ205505">
    <property type="protein sequence ID" value="ADP91132.1"/>
    <property type="molecule type" value="Genomic_DNA"/>
</dbReference>
<dbReference type="EMBL" id="AF527839">
    <property type="protein sequence ID" value="AAM78555.1"/>
    <property type="molecule type" value="Genomic_DNA"/>
</dbReference>
<dbReference type="EMBL" id="AL359540">
    <property type="status" value="NOT_ANNOTATED_CDS"/>
    <property type="molecule type" value="Genomic_DNA"/>
</dbReference>
<dbReference type="EMBL" id="CH471059">
    <property type="protein sequence ID" value="EAX06993.1"/>
    <property type="molecule type" value="Genomic_DNA"/>
</dbReference>
<dbReference type="EMBL" id="CH471059">
    <property type="protein sequence ID" value="EAX06996.1"/>
    <property type="molecule type" value="Genomic_DNA"/>
</dbReference>
<dbReference type="EMBL" id="CH471059">
    <property type="protein sequence ID" value="EAX06997.1"/>
    <property type="molecule type" value="Genomic_DNA"/>
</dbReference>
<dbReference type="EMBL" id="BC003178">
    <property type="protein sequence ID" value="AAH03178.1"/>
    <property type="molecule type" value="mRNA"/>
</dbReference>
<dbReference type="CCDS" id="CCDS41321.1">
    <molecule id="Q9UIF7-5"/>
</dbReference>
<dbReference type="CCDS" id="CCDS41322.1">
    <molecule id="Q9UIF7-6"/>
</dbReference>
<dbReference type="CCDS" id="CCDS520.1">
    <molecule id="Q9UIF7-1"/>
</dbReference>
<dbReference type="CCDS" id="CCDS72776.1">
    <molecule id="Q9UIF7-4"/>
</dbReference>
<dbReference type="CCDS" id="CCDS72777.1">
    <molecule id="Q9UIF7-2"/>
</dbReference>
<dbReference type="RefSeq" id="NP_001041636.2">
    <molecule id="Q9UIF7-6"/>
    <property type="nucleotide sequence ID" value="NM_001048171.2"/>
</dbReference>
<dbReference type="RefSeq" id="NP_001041637.1">
    <molecule id="Q9UIF7-5"/>
    <property type="nucleotide sequence ID" value="NM_001048172.2"/>
</dbReference>
<dbReference type="RefSeq" id="NP_001041638.1">
    <molecule id="Q9UIF7-6"/>
    <property type="nucleotide sequence ID" value="NM_001048173.2"/>
</dbReference>
<dbReference type="RefSeq" id="NP_001041639.1">
    <molecule id="Q9UIF7-6"/>
    <property type="nucleotide sequence ID" value="NM_001048174.2"/>
</dbReference>
<dbReference type="RefSeq" id="NP_001121897.1">
    <property type="nucleotide sequence ID" value="NM_001128425.1"/>
</dbReference>
<dbReference type="RefSeq" id="NP_001280119.1">
    <molecule id="Q9UIF7-2"/>
    <property type="nucleotide sequence ID" value="NM_001293190.2"/>
</dbReference>
<dbReference type="RefSeq" id="NP_001280120.1">
    <molecule id="Q9UIF7-4"/>
    <property type="nucleotide sequence ID" value="NM_001293191.2"/>
</dbReference>
<dbReference type="RefSeq" id="NP_001280121.1">
    <property type="nucleotide sequence ID" value="NM_001293192.1"/>
</dbReference>
<dbReference type="RefSeq" id="NP_001280124.1">
    <molecule id="Q9UIF7-6"/>
    <property type="nucleotide sequence ID" value="NM_001293195.2"/>
</dbReference>
<dbReference type="RefSeq" id="NP_001280125.1">
    <property type="nucleotide sequence ID" value="NM_001293196.1"/>
</dbReference>
<dbReference type="RefSeq" id="NP_001393999.1">
    <molecule id="Q9UIF7-6"/>
    <property type="nucleotide sequence ID" value="NM_001407070.1"/>
</dbReference>
<dbReference type="RefSeq" id="NP_001394000.1">
    <molecule id="Q9UIF7-5"/>
    <property type="nucleotide sequence ID" value="NM_001407071.1"/>
</dbReference>
<dbReference type="RefSeq" id="NP_001394001.1">
    <molecule id="Q9UIF7-6"/>
    <property type="nucleotide sequence ID" value="NM_001407072.1"/>
</dbReference>
<dbReference type="RefSeq" id="NP_001394006.1">
    <molecule id="Q9UIF7-4"/>
    <property type="nucleotide sequence ID" value="NM_001407077.1"/>
</dbReference>
<dbReference type="RefSeq" id="NP_001394007.1">
    <molecule id="Q9UIF7-5"/>
    <property type="nucleotide sequence ID" value="NM_001407078.1"/>
</dbReference>
<dbReference type="RefSeq" id="NP_001394010.1">
    <molecule id="Q9UIF7-6"/>
    <property type="nucleotide sequence ID" value="NM_001407081.1"/>
</dbReference>
<dbReference type="RefSeq" id="NP_001394015.1">
    <molecule id="Q9UIF7-5"/>
    <property type="nucleotide sequence ID" value="NM_001407086.1"/>
</dbReference>
<dbReference type="RefSeq" id="NP_001394017.1">
    <molecule id="Q9UIF7-6"/>
    <property type="nucleotide sequence ID" value="NM_001407088.1"/>
</dbReference>
<dbReference type="RefSeq" id="NP_001394018.1">
    <molecule id="Q9UIF7-6"/>
    <property type="nucleotide sequence ID" value="NM_001407089.1"/>
</dbReference>
<dbReference type="RefSeq" id="NP_036354.1">
    <molecule id="Q9UIF7-1"/>
    <property type="nucleotide sequence ID" value="NM_012222.3"/>
</dbReference>
<dbReference type="RefSeq" id="XP_011539806.1">
    <property type="nucleotide sequence ID" value="XM_011541504.2"/>
</dbReference>
<dbReference type="RefSeq" id="XP_016856823.1">
    <property type="nucleotide sequence ID" value="XM_017001334.1"/>
</dbReference>
<dbReference type="RefSeq" id="XP_016856824.1">
    <property type="nucleotide sequence ID" value="XM_017001335.1"/>
</dbReference>
<dbReference type="PDB" id="1X51">
    <property type="method" value="NMR"/>
    <property type="chains" value="A=356-497"/>
</dbReference>
<dbReference type="PDB" id="3N5N">
    <property type="method" value="X-ray"/>
    <property type="resolution" value="2.30 A"/>
    <property type="chains" value="X/Y=76-362"/>
</dbReference>
<dbReference type="PDB" id="8FAY">
    <property type="method" value="X-ray"/>
    <property type="resolution" value="1.91 A"/>
    <property type="chains" value="A/D=64-516"/>
</dbReference>
<dbReference type="PDBsum" id="1X51"/>
<dbReference type="PDBsum" id="3N5N"/>
<dbReference type="PDBsum" id="8FAY"/>
<dbReference type="SMR" id="Q9UIF7"/>
<dbReference type="BioGRID" id="110681">
    <property type="interactions" value="29"/>
</dbReference>
<dbReference type="DIP" id="DIP-41972N"/>
<dbReference type="FunCoup" id="Q9UIF7">
    <property type="interactions" value="1732"/>
</dbReference>
<dbReference type="IntAct" id="Q9UIF7">
    <property type="interactions" value="16"/>
</dbReference>
<dbReference type="MINT" id="Q9UIF7"/>
<dbReference type="STRING" id="9606.ENSP00000500891"/>
<dbReference type="iPTMnet" id="Q9UIF7"/>
<dbReference type="PhosphoSitePlus" id="Q9UIF7"/>
<dbReference type="BioMuta" id="MUTYH"/>
<dbReference type="DMDM" id="48428272"/>
<dbReference type="jPOST" id="Q9UIF7"/>
<dbReference type="MassIVE" id="Q9UIF7"/>
<dbReference type="PaxDb" id="9606-ENSP00000361170"/>
<dbReference type="PeptideAtlas" id="Q9UIF7"/>
<dbReference type="ProteomicsDB" id="84500">
    <molecule id="Q9UIF7-1"/>
</dbReference>
<dbReference type="ProteomicsDB" id="84501">
    <molecule id="Q9UIF7-2"/>
</dbReference>
<dbReference type="ProteomicsDB" id="84502">
    <molecule id="Q9UIF7-3"/>
</dbReference>
<dbReference type="ProteomicsDB" id="84503">
    <molecule id="Q9UIF7-4"/>
</dbReference>
<dbReference type="ProteomicsDB" id="84504">
    <molecule id="Q9UIF7-5"/>
</dbReference>
<dbReference type="ProteomicsDB" id="84505">
    <molecule id="Q9UIF7-6"/>
</dbReference>
<dbReference type="Pumba" id="Q9UIF7"/>
<dbReference type="Antibodypedia" id="1869">
    <property type="antibodies" value="332 antibodies from 40 providers"/>
</dbReference>
<dbReference type="CPTC" id="Q9UIF7">
    <property type="antibodies" value="1 antibody"/>
</dbReference>
<dbReference type="DNASU" id="4595"/>
<dbReference type="Ensembl" id="ENST00000354383.10">
    <molecule id="Q9UIF7-5"/>
    <property type="protein sequence ID" value="ENSP00000346354.6"/>
    <property type="gene ID" value="ENSG00000132781.22"/>
</dbReference>
<dbReference type="Ensembl" id="ENST00000355498.6">
    <molecule id="Q9UIF7-6"/>
    <property type="protein sequence ID" value="ENSP00000347685.2"/>
    <property type="gene ID" value="ENSG00000132781.22"/>
</dbReference>
<dbReference type="Ensembl" id="ENST00000372098.7">
    <molecule id="Q9UIF7-1"/>
    <property type="protein sequence ID" value="ENSP00000361170.3"/>
    <property type="gene ID" value="ENSG00000132781.22"/>
</dbReference>
<dbReference type="Ensembl" id="ENST00000372104.5">
    <molecule id="Q9UIF7-6"/>
    <property type="protein sequence ID" value="ENSP00000361176.1"/>
    <property type="gene ID" value="ENSG00000132781.22"/>
</dbReference>
<dbReference type="Ensembl" id="ENST00000372110.7">
    <molecule id="Q9UIF7-2"/>
    <property type="protein sequence ID" value="ENSP00000361182.3"/>
    <property type="gene ID" value="ENSG00000132781.22"/>
</dbReference>
<dbReference type="Ensembl" id="ENST00000372115.7">
    <molecule id="Q9UIF7-3"/>
    <property type="protein sequence ID" value="ENSP00000361187.3"/>
    <property type="gene ID" value="ENSG00000132781.22"/>
</dbReference>
<dbReference type="Ensembl" id="ENST00000435155.2">
    <molecule id="Q9UIF7-4"/>
    <property type="protein sequence ID" value="ENSP00000403655.2"/>
    <property type="gene ID" value="ENSG00000132781.22"/>
</dbReference>
<dbReference type="Ensembl" id="ENST00000448481.5">
    <molecule id="Q9UIF7-4"/>
    <property type="protein sequence ID" value="ENSP00000409718.1"/>
    <property type="gene ID" value="ENSG00000132781.22"/>
</dbReference>
<dbReference type="Ensembl" id="ENST00000456914.7">
    <molecule id="Q9UIF7-6"/>
    <property type="protein sequence ID" value="ENSP00000407590.2"/>
    <property type="gene ID" value="ENSG00000132781.22"/>
</dbReference>
<dbReference type="Ensembl" id="ENST00000672314.2">
    <molecule id="Q9UIF7-6"/>
    <property type="protein sequence ID" value="ENSP00000500828.2"/>
    <property type="gene ID" value="ENSG00000132781.22"/>
</dbReference>
<dbReference type="Ensembl" id="ENST00000672818.3">
    <molecule id="Q9UIF7-1"/>
    <property type="protein sequence ID" value="ENSP00000500891.1"/>
    <property type="gene ID" value="ENSG00000132781.22"/>
</dbReference>
<dbReference type="Ensembl" id="ENST00000713750.1">
    <molecule id="Q9UIF7-6"/>
    <property type="protein sequence ID" value="ENSP00000519051.1"/>
    <property type="gene ID" value="ENSG00000132781.22"/>
</dbReference>
<dbReference type="GeneID" id="4595"/>
<dbReference type="KEGG" id="hsa:4595"/>
<dbReference type="MANE-Select" id="ENST00000456914.7">
    <molecule id="Q9UIF7-6"/>
    <property type="protein sequence ID" value="ENSP00000407590.2"/>
    <property type="RefSeq nucleotide sequence ID" value="NM_001048174.2"/>
    <property type="RefSeq protein sequence ID" value="NP_001041639.1"/>
</dbReference>
<dbReference type="UCSC" id="uc001cnf.4">
    <molecule id="Q9UIF7-1"/>
    <property type="organism name" value="human"/>
</dbReference>
<dbReference type="AGR" id="HGNC:7527"/>
<dbReference type="CTD" id="4595"/>
<dbReference type="DisGeNET" id="4595"/>
<dbReference type="GeneCards" id="MUTYH"/>
<dbReference type="GeneReviews" id="MUTYH"/>
<dbReference type="HGNC" id="HGNC:7527">
    <property type="gene designation" value="MUTYH"/>
</dbReference>
<dbReference type="HPA" id="ENSG00000132781">
    <property type="expression patterns" value="Low tissue specificity"/>
</dbReference>
<dbReference type="MalaCards" id="MUTYH"/>
<dbReference type="MIM" id="604933">
    <property type="type" value="gene"/>
</dbReference>
<dbReference type="MIM" id="608456">
    <property type="type" value="phenotype"/>
</dbReference>
<dbReference type="MIM" id="613659">
    <property type="type" value="phenotype"/>
</dbReference>
<dbReference type="neXtProt" id="NX_Q9UIF7"/>
<dbReference type="OpenTargets" id="ENSG00000132781"/>
<dbReference type="Orphanet" id="440437">
    <property type="disease" value="Familial colorectal cancer Type X"/>
</dbReference>
<dbReference type="Orphanet" id="247798">
    <property type="disease" value="MUTYH-related attenuated familial adenomatous polyposis"/>
</dbReference>
<dbReference type="PharmGKB" id="PA31328"/>
<dbReference type="VEuPathDB" id="HostDB:ENSG00000132781"/>
<dbReference type="eggNOG" id="KOG2457">
    <property type="taxonomic scope" value="Eukaryota"/>
</dbReference>
<dbReference type="GeneTree" id="ENSGT00510000047220"/>
<dbReference type="HOGENOM" id="CLU_012862_0_0_1"/>
<dbReference type="InParanoid" id="Q9UIF7"/>
<dbReference type="OMA" id="CRPGDFN"/>
<dbReference type="OrthoDB" id="10248838at2759"/>
<dbReference type="PAN-GO" id="Q9UIF7">
    <property type="GO annotations" value="7 GO annotations based on evolutionary models"/>
</dbReference>
<dbReference type="PhylomeDB" id="Q9UIF7"/>
<dbReference type="TreeFam" id="TF328549"/>
<dbReference type="PathwayCommons" id="Q9UIF7"/>
<dbReference type="Reactome" id="R-HSA-110330">
    <property type="pathway name" value="Recognition and association of DNA glycosylase with site containing an affected purine"/>
</dbReference>
<dbReference type="Reactome" id="R-HSA-110331">
    <property type="pathway name" value="Cleavage of the damaged purine"/>
</dbReference>
<dbReference type="Reactome" id="R-HSA-110357">
    <property type="pathway name" value="Displacement of DNA glycosylase by APEX1"/>
</dbReference>
<dbReference type="Reactome" id="R-HSA-9608287">
    <molecule id="Q9UIF7-3"/>
    <property type="pathway name" value="Defective MUTYH substrate binding"/>
</dbReference>
<dbReference type="Reactome" id="R-HSA-9608290">
    <property type="pathway name" value="Defective MUTYH substrate processing"/>
</dbReference>
<dbReference type="SignaLink" id="Q9UIF7"/>
<dbReference type="SIGNOR" id="Q9UIF7"/>
<dbReference type="BioGRID-ORCS" id="4595">
    <property type="hits" value="18 hits in 1164 CRISPR screens"/>
</dbReference>
<dbReference type="EvolutionaryTrace" id="Q9UIF7"/>
<dbReference type="GeneWiki" id="MUTYH"/>
<dbReference type="GenomeRNAi" id="4595"/>
<dbReference type="Pharos" id="Q9UIF7">
    <property type="development level" value="Tbio"/>
</dbReference>
<dbReference type="PRO" id="PR:Q9UIF7"/>
<dbReference type="Proteomes" id="UP000005640">
    <property type="component" value="Chromosome 1"/>
</dbReference>
<dbReference type="RNAct" id="Q9UIF7">
    <property type="molecule type" value="protein"/>
</dbReference>
<dbReference type="Bgee" id="ENSG00000132781">
    <property type="expression patterns" value="Expressed in cerebellar hemisphere and 95 other cell types or tissues"/>
</dbReference>
<dbReference type="ExpressionAtlas" id="Q9UIF7">
    <property type="expression patterns" value="baseline and differential"/>
</dbReference>
<dbReference type="GO" id="GO:0005739">
    <property type="term" value="C:mitochondrion"/>
    <property type="evidence" value="ECO:0006056"/>
    <property type="project" value="FlyBase"/>
</dbReference>
<dbReference type="GO" id="GO:0005654">
    <property type="term" value="C:nucleoplasm"/>
    <property type="evidence" value="ECO:0000314"/>
    <property type="project" value="HPA"/>
</dbReference>
<dbReference type="GO" id="GO:0005634">
    <property type="term" value="C:nucleus"/>
    <property type="evidence" value="ECO:0000318"/>
    <property type="project" value="GO_Central"/>
</dbReference>
<dbReference type="GO" id="GO:0051539">
    <property type="term" value="F:4 iron, 4 sulfur cluster binding"/>
    <property type="evidence" value="ECO:0007669"/>
    <property type="project" value="UniProtKB-KW"/>
</dbReference>
<dbReference type="GO" id="GO:0034039">
    <property type="term" value="F:8-oxo-7,8-dihydroguanine DNA N-glycosylase activity"/>
    <property type="evidence" value="ECO:0000318"/>
    <property type="project" value="GO_Central"/>
</dbReference>
<dbReference type="GO" id="GO:0035485">
    <property type="term" value="F:adenine/guanine mispair binding"/>
    <property type="evidence" value="ECO:0000318"/>
    <property type="project" value="GO_Central"/>
</dbReference>
<dbReference type="GO" id="GO:0019104">
    <property type="term" value="F:DNA N-glycosylase activity"/>
    <property type="evidence" value="ECO:0000304"/>
    <property type="project" value="Reactome"/>
</dbReference>
<dbReference type="GO" id="GO:0046872">
    <property type="term" value="F:metal ion binding"/>
    <property type="evidence" value="ECO:0007669"/>
    <property type="project" value="UniProtKB-KW"/>
</dbReference>
<dbReference type="GO" id="GO:0032407">
    <property type="term" value="F:MutSalpha complex binding"/>
    <property type="evidence" value="ECO:0000314"/>
    <property type="project" value="HGNC-UCL"/>
</dbReference>
<dbReference type="GO" id="GO:0032357">
    <property type="term" value="F:oxidized purine DNA binding"/>
    <property type="evidence" value="ECO:0000318"/>
    <property type="project" value="GO_Central"/>
</dbReference>
<dbReference type="GO" id="GO:0000701">
    <property type="term" value="F:purine-specific mismatch base pair DNA N-glycosylase activity"/>
    <property type="evidence" value="ECO:0000315"/>
    <property type="project" value="UniProtKB"/>
</dbReference>
<dbReference type="GO" id="GO:0006284">
    <property type="term" value="P:base-excision repair"/>
    <property type="evidence" value="ECO:0000318"/>
    <property type="project" value="GO_Central"/>
</dbReference>
<dbReference type="GO" id="GO:0045007">
    <property type="term" value="P:depurination"/>
    <property type="evidence" value="ECO:0000304"/>
    <property type="project" value="Reactome"/>
</dbReference>
<dbReference type="GO" id="GO:0006281">
    <property type="term" value="P:DNA repair"/>
    <property type="evidence" value="ECO:0000304"/>
    <property type="project" value="ProtInc"/>
</dbReference>
<dbReference type="GO" id="GO:0006298">
    <property type="term" value="P:mismatch repair"/>
    <property type="evidence" value="ECO:0000318"/>
    <property type="project" value="GO_Central"/>
</dbReference>
<dbReference type="GO" id="GO:0060546">
    <property type="term" value="P:negative regulation of necroptotic process"/>
    <property type="evidence" value="ECO:0007669"/>
    <property type="project" value="Ensembl"/>
</dbReference>
<dbReference type="CDD" id="cd00056">
    <property type="entry name" value="ENDO3c"/>
    <property type="match status" value="1"/>
</dbReference>
<dbReference type="CDD" id="cd03431">
    <property type="entry name" value="NUDIX_DNA_Glycosylase_C-MutY"/>
    <property type="match status" value="1"/>
</dbReference>
<dbReference type="FunFam" id="1.10.1670.10:FF:000002">
    <property type="entry name" value="Adenine DNA glycosylase"/>
    <property type="match status" value="1"/>
</dbReference>
<dbReference type="FunFam" id="1.10.340.30:FF:000002">
    <property type="entry name" value="Adenine DNA glycosylase"/>
    <property type="match status" value="1"/>
</dbReference>
<dbReference type="FunFam" id="3.90.79.10:FF:000026">
    <property type="entry name" value="Adenine DNA glycosylase"/>
    <property type="match status" value="1"/>
</dbReference>
<dbReference type="Gene3D" id="1.10.1670.10">
    <property type="entry name" value="Helix-hairpin-Helix base-excision DNA repair enzymes (C-terminal)"/>
    <property type="match status" value="1"/>
</dbReference>
<dbReference type="Gene3D" id="1.10.340.30">
    <property type="entry name" value="Hypothetical protein, domain 2"/>
    <property type="match status" value="1"/>
</dbReference>
<dbReference type="Gene3D" id="3.90.79.10">
    <property type="entry name" value="Nucleoside Triphosphate Pyrophosphohydrolase"/>
    <property type="match status" value="1"/>
</dbReference>
<dbReference type="InterPro" id="IPR011257">
    <property type="entry name" value="DNA_glycosylase"/>
</dbReference>
<dbReference type="InterPro" id="IPR004036">
    <property type="entry name" value="Endonuclease-III-like_CS2"/>
</dbReference>
<dbReference type="InterPro" id="IPR003651">
    <property type="entry name" value="Endonuclease3_FeS-loop_motif"/>
</dbReference>
<dbReference type="InterPro" id="IPR004035">
    <property type="entry name" value="Endouclease-III_FeS-bd_BS"/>
</dbReference>
<dbReference type="InterPro" id="IPR003265">
    <property type="entry name" value="HhH-GPD_domain"/>
</dbReference>
<dbReference type="InterPro" id="IPR023170">
    <property type="entry name" value="HhH_base_excis_C"/>
</dbReference>
<dbReference type="InterPro" id="IPR000445">
    <property type="entry name" value="HhH_motif"/>
</dbReference>
<dbReference type="InterPro" id="IPR044298">
    <property type="entry name" value="MIG/MutY"/>
</dbReference>
<dbReference type="InterPro" id="IPR029119">
    <property type="entry name" value="MutY_C"/>
</dbReference>
<dbReference type="InterPro" id="IPR015797">
    <property type="entry name" value="NUDIX_hydrolase-like_dom_sf"/>
</dbReference>
<dbReference type="InterPro" id="IPR000086">
    <property type="entry name" value="NUDIX_hydrolase_dom"/>
</dbReference>
<dbReference type="PANTHER" id="PTHR42944">
    <property type="entry name" value="ADENINE DNA GLYCOSYLASE"/>
    <property type="match status" value="1"/>
</dbReference>
<dbReference type="PANTHER" id="PTHR42944:SF1">
    <property type="entry name" value="ADENINE DNA GLYCOSYLASE"/>
    <property type="match status" value="1"/>
</dbReference>
<dbReference type="Pfam" id="PF00633">
    <property type="entry name" value="HHH"/>
    <property type="match status" value="1"/>
</dbReference>
<dbReference type="Pfam" id="PF00730">
    <property type="entry name" value="HhH-GPD"/>
    <property type="match status" value="1"/>
</dbReference>
<dbReference type="Pfam" id="PF14815">
    <property type="entry name" value="NUDIX_4"/>
    <property type="match status" value="1"/>
</dbReference>
<dbReference type="SMART" id="SM00478">
    <property type="entry name" value="ENDO3c"/>
    <property type="match status" value="1"/>
</dbReference>
<dbReference type="SMART" id="SM00525">
    <property type="entry name" value="FES"/>
    <property type="match status" value="1"/>
</dbReference>
<dbReference type="SUPFAM" id="SSF48150">
    <property type="entry name" value="DNA-glycosylase"/>
    <property type="match status" value="1"/>
</dbReference>
<dbReference type="SUPFAM" id="SSF55811">
    <property type="entry name" value="Nudix"/>
    <property type="match status" value="1"/>
</dbReference>
<dbReference type="PROSITE" id="PS00764">
    <property type="entry name" value="ENDONUCLEASE_III_1"/>
    <property type="match status" value="1"/>
</dbReference>
<dbReference type="PROSITE" id="PS01155">
    <property type="entry name" value="ENDONUCLEASE_III_2"/>
    <property type="match status" value="1"/>
</dbReference>
<dbReference type="PROSITE" id="PS51462">
    <property type="entry name" value="NUDIX"/>
    <property type="match status" value="1"/>
</dbReference>
<keyword id="KW-0002">3D-structure</keyword>
<keyword id="KW-0004">4Fe-4S</keyword>
<keyword id="KW-0025">Alternative splicing</keyword>
<keyword id="KW-0225">Disease variant</keyword>
<keyword id="KW-0227">DNA damage</keyword>
<keyword id="KW-0234">DNA repair</keyword>
<keyword id="KW-0326">Glycosidase</keyword>
<keyword id="KW-0378">Hydrolase</keyword>
<keyword id="KW-0408">Iron</keyword>
<keyword id="KW-0411">Iron-sulfur</keyword>
<keyword id="KW-0479">Metal-binding</keyword>
<keyword id="KW-0496">Mitochondrion</keyword>
<keyword id="KW-0539">Nucleus</keyword>
<keyword id="KW-1267">Proteomics identification</keyword>
<keyword id="KW-1185">Reference proteome</keyword>
<keyword id="KW-0043">Tumor suppressor</keyword>
<evidence type="ECO:0000250" key="1"/>
<evidence type="ECO:0000250" key="2">
    <source>
        <dbReference type="UniProtKB" id="P83847"/>
    </source>
</evidence>
<evidence type="ECO:0000250" key="3">
    <source>
        <dbReference type="UniProtKB" id="Q99P21"/>
    </source>
</evidence>
<evidence type="ECO:0000255" key="4">
    <source>
        <dbReference type="PROSITE-ProRule" id="PRU00794"/>
    </source>
</evidence>
<evidence type="ECO:0000256" key="5">
    <source>
        <dbReference type="SAM" id="MobiDB-lite"/>
    </source>
</evidence>
<evidence type="ECO:0000269" key="6">
    <source>
    </source>
</evidence>
<evidence type="ECO:0000269" key="7">
    <source>
    </source>
</evidence>
<evidence type="ECO:0000269" key="8">
    <source>
    </source>
</evidence>
<evidence type="ECO:0000269" key="9">
    <source>
    </source>
</evidence>
<evidence type="ECO:0000269" key="10">
    <source>
    </source>
</evidence>
<evidence type="ECO:0000269" key="11">
    <source>
    </source>
</evidence>
<evidence type="ECO:0000269" key="12">
    <source>
    </source>
</evidence>
<evidence type="ECO:0000269" key="13">
    <source>
    </source>
</evidence>
<evidence type="ECO:0000269" key="14">
    <source>
    </source>
</evidence>
<evidence type="ECO:0000269" key="15">
    <source>
    </source>
</evidence>
<evidence type="ECO:0000269" key="16">
    <source>
    </source>
</evidence>
<evidence type="ECO:0000269" key="17">
    <source>
    </source>
</evidence>
<evidence type="ECO:0000269" key="18">
    <source>
    </source>
</evidence>
<evidence type="ECO:0000269" key="19">
    <source>
    </source>
</evidence>
<evidence type="ECO:0000269" key="20">
    <source>
    </source>
</evidence>
<evidence type="ECO:0000269" key="21">
    <source>
    </source>
</evidence>
<evidence type="ECO:0000269" key="22">
    <source>
    </source>
</evidence>
<evidence type="ECO:0000269" key="23">
    <source ref="4"/>
</evidence>
<evidence type="ECO:0000303" key="24">
    <source>
    </source>
</evidence>
<evidence type="ECO:0000303" key="25">
    <source>
    </source>
</evidence>
<evidence type="ECO:0000305" key="26"/>
<evidence type="ECO:0007829" key="27">
    <source>
        <dbReference type="PDB" id="1X51"/>
    </source>
</evidence>
<evidence type="ECO:0007829" key="28">
    <source>
        <dbReference type="PDB" id="3N5N"/>
    </source>
</evidence>
<evidence type="ECO:0007829" key="29">
    <source>
        <dbReference type="PDB" id="8FAY"/>
    </source>
</evidence>
<comment type="function">
    <text evidence="6 19 20 21 22">Involved in oxidative DNA damage repair. Initiates repair of A*oxoG to C*G by removing the inappropriately paired adenine base from the DNA backbone. Possesses both adenine and 2-OH-A DNA glycosylase activities.</text>
</comment>
<comment type="catalytic activity">
    <reaction evidence="19">
        <text>Hydrolyzes free adenine bases from 7,8-dihydro-8-oxoguanine:adenine mismatched double-stranded DNA, leaving an apurinic site.</text>
        <dbReference type="EC" id="3.2.2.31"/>
    </reaction>
</comment>
<comment type="cofactor">
    <cofactor evidence="1">
        <name>[4Fe-4S] cluster</name>
        <dbReference type="ChEBI" id="CHEBI:49883"/>
    </cofactor>
    <text evidence="1">Binds 1 [4Fe-4S] cluster. The cluster does not appear to play a role in catalysis, but is probably involved in the proper positioning of the enzyme along the DNA strand.</text>
</comment>
<comment type="interaction">
    <interactant intactId="EBI-10321956">
        <id>Q9UIF7-3</id>
    </interactant>
    <interactant intactId="EBI-741181">
        <id>Q6RW13</id>
        <label>AGTRAP</label>
    </interactant>
    <organismsDiffer>false</organismsDiffer>
    <experiments>3</experiments>
</comment>
<comment type="subcellular location">
    <subcellularLocation>
        <location evidence="21">Nucleus</location>
    </subcellularLocation>
    <subcellularLocation>
        <location evidence="3">Mitochondrion</location>
    </subcellularLocation>
</comment>
<comment type="alternative products">
    <event type="alternative splicing"/>
    <isoform>
        <id>Q9UIF7-1</id>
        <name>Alpha-1</name>
        <sequence type="displayed"/>
    </isoform>
    <isoform>
        <id>Q9UIF7-2</id>
        <name>Alpha-2</name>
        <sequence type="described" ref="VSP_010549"/>
    </isoform>
    <isoform>
        <id>Q9UIF7-3</id>
        <name>Alpha-3</name>
        <sequence type="described" ref="VSP_010550"/>
    </isoform>
    <isoform>
        <id>Q9UIF7-4</id>
        <name>Beta-1</name>
        <sequence type="described" ref="VSP_010548"/>
    </isoform>
    <isoform>
        <id>Q9UIF7-5</id>
        <name>Gamma-2</name>
        <sequence type="described" ref="VSP_010548 VSP_010549"/>
    </isoform>
    <isoform>
        <id>Q9UIF7-6</id>
        <name>Gamma-3</name>
        <sequence type="described" ref="VSP_010548 VSP_010550"/>
    </isoform>
</comment>
<comment type="disease" evidence="7 8 9 11 12 13 14 15 16 17 18 19 20 21 22">
    <disease id="DI-01228">
        <name>Familial adenomatous polyposis 2</name>
        <acronym>FAP2</acronym>
        <description>A condition characterized by the development of multiple colorectal adenomatous polyps, benign neoplasms derived from glandular epithelium. Some affected individuals may develop colorectal carcinoma.</description>
        <dbReference type="MIM" id="608456"/>
    </disease>
    <text>The disease is caused by variants affecting the gene represented in this entry.</text>
</comment>
<comment type="disease" evidence="10 21">
    <disease id="DI-02971">
        <name>Gastric cancer</name>
        <acronym>GASC</acronym>
        <description>A malignant disease which starts in the stomach, can spread to the esophagus or the small intestine, and can extend through the stomach wall to nearby lymph nodes and organs. It also can metastasize to other parts of the body. The term gastric cancer or gastric carcinoma refers to adenocarcinoma of the stomach that accounts for most of all gastric malignant tumors. Two main histologic types are recognized, diffuse type and intestinal type carcinomas. Diffuse tumors are poorly differentiated infiltrating lesions, resulting in thickening of the stomach. In contrast, intestinal tumors are usually exophytic, often ulcerating, and associated with intestinal metaplasia of the stomach, most often observed in sporadic disease.</description>
        <dbReference type="MIM" id="613659"/>
    </disease>
    <text evidence="10">The gene represented in this entry may be involved in disease pathogenesis. Somatic mutations contribute to the development of a sub-set of sporadic gastric cancers in carriers of Helicobacter pylori (PubMed:15273732).</text>
</comment>
<comment type="similarity">
    <text evidence="26">Belongs to the Nth/MutY family.</text>
</comment>
<comment type="sequence caution" evidence="26">
    <conflict type="erroneous initiation">
        <sequence resource="EMBL-CDS" id="BAA89339"/>
    </conflict>
    <text>Truncated N-terminus.</text>
</comment>
<comment type="sequence caution" evidence="26">
    <conflict type="miscellaneous discrepancy">
        <sequence resource="EMBL-CDS" id="BAA89339"/>
    </conflict>
    <text>Probable cloning artifact.</text>
</comment>
<comment type="sequence caution" evidence="26">
    <conflict type="erroneous initiation">
        <sequence resource="EMBL-CDS" id="BAA89345"/>
    </conflict>
    <text>Truncated N-terminus.</text>
</comment>
<comment type="sequence caution" evidence="26">
    <conflict type="miscellaneous discrepancy">
        <sequence resource="EMBL-CDS" id="BAA89345"/>
    </conflict>
    <text>Probable cloning artifact.</text>
</comment>
<comment type="online information" name="Atlas of Genetics and Cytogenetics in Oncology and Haematology">
    <link uri="https://atlasgeneticsoncology.org/gene/41464/mutyh-(muty-homolog-(e-coli))"/>
</comment>
<gene>
    <name type="primary">MUTYH</name>
    <name type="synonym">MYH</name>
</gene>
<name>MUTYH_HUMAN</name>
<protein>
    <recommendedName>
        <fullName>Adenine DNA glycosylase</fullName>
        <ecNumber evidence="19">3.2.2.31</ecNumber>
    </recommendedName>
    <alternativeName>
        <fullName>MutY homolog</fullName>
        <shortName>hMYH</shortName>
    </alternativeName>
</protein>
<accession>Q9UIF7</accession>
<accession>D3DPZ4</accession>
<accession>Q15830</accession>
<accession>Q9UBP2</accession>
<accession>Q9UBS7</accession>
<accession>Q9UIF4</accession>
<accession>Q9UIF5</accession>
<accession>Q9UIF6</accession>
<reference key="1">
    <citation type="journal article" date="1996" name="J. Bacteriol.">
        <title>Cloning and sequencing a human homolog (hMYH) of the Escherichia coli mutY gene whose function is required for the repair of oxidative DNA damage.</title>
        <authorList>
            <person name="Slupska M.M."/>
            <person name="Baikalov C."/>
            <person name="Luther W.M."/>
            <person name="Chiang J.H."/>
            <person name="Wei Y.F."/>
            <person name="Miller J.H."/>
        </authorList>
    </citation>
    <scope>NUCLEOTIDE SEQUENCE [GENOMIC DNA] (ISOFORM ALPHA-3)</scope>
</reference>
<reference key="2">
    <citation type="journal article" date="2000" name="Nucleic Acids Res.">
        <title>Identification of human MutY homolog (hMYH) as a repair enzyme for 2-hydroxyadenine in DNA and detection of multiple forms of hMYH located in nuclei and mitochondria.</title>
        <authorList>
            <person name="Ohtsubo T."/>
            <person name="Nishioka K."/>
            <person name="Imaiso Y."/>
            <person name="Iwai S."/>
            <person name="Shimokawa H."/>
            <person name="Oda H."/>
            <person name="Fujikawa T."/>
            <person name="Nakabeppu Y."/>
        </authorList>
    </citation>
    <scope>NUCLEOTIDE SEQUENCE [MRNA] (ISOFORMS ALPHA-1; ALPHA-2; ALPHA-3; BETA-1; GAMMA-2 AND GAMMA-3)</scope>
    <scope>FUNCTION</scope>
</reference>
<reference key="3">
    <citation type="journal article" date="2011" name="Nucleic Acids Res.">
        <title>Identification of rare DNA variants in mitochondrial disorders with improved array-based sequencing.</title>
        <authorList>
            <person name="Wang W."/>
            <person name="Shen P."/>
            <person name="Thiyagarajan S."/>
            <person name="Lin S."/>
            <person name="Palm C."/>
            <person name="Horvath R."/>
            <person name="Klopstock T."/>
            <person name="Cutler D."/>
            <person name="Pique L."/>
            <person name="Schrijver I."/>
            <person name="Davis R.W."/>
            <person name="Mindrinos M."/>
            <person name="Speed T.P."/>
            <person name="Scharfe C."/>
        </authorList>
    </citation>
    <scope>NUCLEOTIDE SEQUENCE [GENOMIC DNA]</scope>
</reference>
<reference key="4">
    <citation type="submission" date="2002-07" db="EMBL/GenBank/DDBJ databases">
        <authorList>
            <consortium name="NIEHS SNPs program"/>
        </authorList>
    </citation>
    <scope>NUCLEOTIDE SEQUENCE [GENOMIC DNA]</scope>
    <scope>VARIANTS MET-22; HIS-335; GLU-500; MET-526 AND GLN-531</scope>
</reference>
<reference key="5">
    <citation type="journal article" date="2006" name="Nature">
        <title>The DNA sequence and biological annotation of human chromosome 1.</title>
        <authorList>
            <person name="Gregory S.G."/>
            <person name="Barlow K.F."/>
            <person name="McLay K.E."/>
            <person name="Kaul R."/>
            <person name="Swarbreck D."/>
            <person name="Dunham A."/>
            <person name="Scott C.E."/>
            <person name="Howe K.L."/>
            <person name="Woodfine K."/>
            <person name="Spencer C.C.A."/>
            <person name="Jones M.C."/>
            <person name="Gillson C."/>
            <person name="Searle S."/>
            <person name="Zhou Y."/>
            <person name="Kokocinski F."/>
            <person name="McDonald L."/>
            <person name="Evans R."/>
            <person name="Phillips K."/>
            <person name="Atkinson A."/>
            <person name="Cooper R."/>
            <person name="Jones C."/>
            <person name="Hall R.E."/>
            <person name="Andrews T.D."/>
            <person name="Lloyd C."/>
            <person name="Ainscough R."/>
            <person name="Almeida J.P."/>
            <person name="Ambrose K.D."/>
            <person name="Anderson F."/>
            <person name="Andrew R.W."/>
            <person name="Ashwell R.I.S."/>
            <person name="Aubin K."/>
            <person name="Babbage A.K."/>
            <person name="Bagguley C.L."/>
            <person name="Bailey J."/>
            <person name="Beasley H."/>
            <person name="Bethel G."/>
            <person name="Bird C.P."/>
            <person name="Bray-Allen S."/>
            <person name="Brown J.Y."/>
            <person name="Brown A.J."/>
            <person name="Buckley D."/>
            <person name="Burton J."/>
            <person name="Bye J."/>
            <person name="Carder C."/>
            <person name="Chapman J.C."/>
            <person name="Clark S.Y."/>
            <person name="Clarke G."/>
            <person name="Clee C."/>
            <person name="Cobley V."/>
            <person name="Collier R.E."/>
            <person name="Corby N."/>
            <person name="Coville G.J."/>
            <person name="Davies J."/>
            <person name="Deadman R."/>
            <person name="Dunn M."/>
            <person name="Earthrowl M."/>
            <person name="Ellington A.G."/>
            <person name="Errington H."/>
            <person name="Frankish A."/>
            <person name="Frankland J."/>
            <person name="French L."/>
            <person name="Garner P."/>
            <person name="Garnett J."/>
            <person name="Gay L."/>
            <person name="Ghori M.R.J."/>
            <person name="Gibson R."/>
            <person name="Gilby L.M."/>
            <person name="Gillett W."/>
            <person name="Glithero R.J."/>
            <person name="Grafham D.V."/>
            <person name="Griffiths C."/>
            <person name="Griffiths-Jones S."/>
            <person name="Grocock R."/>
            <person name="Hammond S."/>
            <person name="Harrison E.S.I."/>
            <person name="Hart E."/>
            <person name="Haugen E."/>
            <person name="Heath P.D."/>
            <person name="Holmes S."/>
            <person name="Holt K."/>
            <person name="Howden P.J."/>
            <person name="Hunt A.R."/>
            <person name="Hunt S.E."/>
            <person name="Hunter G."/>
            <person name="Isherwood J."/>
            <person name="James R."/>
            <person name="Johnson C."/>
            <person name="Johnson D."/>
            <person name="Joy A."/>
            <person name="Kay M."/>
            <person name="Kershaw J.K."/>
            <person name="Kibukawa M."/>
            <person name="Kimberley A.M."/>
            <person name="King A."/>
            <person name="Knights A.J."/>
            <person name="Lad H."/>
            <person name="Laird G."/>
            <person name="Lawlor S."/>
            <person name="Leongamornlert D.A."/>
            <person name="Lloyd D.M."/>
            <person name="Loveland J."/>
            <person name="Lovell J."/>
            <person name="Lush M.J."/>
            <person name="Lyne R."/>
            <person name="Martin S."/>
            <person name="Mashreghi-Mohammadi M."/>
            <person name="Matthews L."/>
            <person name="Matthews N.S.W."/>
            <person name="McLaren S."/>
            <person name="Milne S."/>
            <person name="Mistry S."/>
            <person name="Moore M.J.F."/>
            <person name="Nickerson T."/>
            <person name="O'Dell C.N."/>
            <person name="Oliver K."/>
            <person name="Palmeiri A."/>
            <person name="Palmer S.A."/>
            <person name="Parker A."/>
            <person name="Patel D."/>
            <person name="Pearce A.V."/>
            <person name="Peck A.I."/>
            <person name="Pelan S."/>
            <person name="Phelps K."/>
            <person name="Phillimore B.J."/>
            <person name="Plumb R."/>
            <person name="Rajan J."/>
            <person name="Raymond C."/>
            <person name="Rouse G."/>
            <person name="Saenphimmachak C."/>
            <person name="Sehra H.K."/>
            <person name="Sheridan E."/>
            <person name="Shownkeen R."/>
            <person name="Sims S."/>
            <person name="Skuce C.D."/>
            <person name="Smith M."/>
            <person name="Steward C."/>
            <person name="Subramanian S."/>
            <person name="Sycamore N."/>
            <person name="Tracey A."/>
            <person name="Tromans A."/>
            <person name="Van Helmond Z."/>
            <person name="Wall M."/>
            <person name="Wallis J.M."/>
            <person name="White S."/>
            <person name="Whitehead S.L."/>
            <person name="Wilkinson J.E."/>
            <person name="Willey D.L."/>
            <person name="Williams H."/>
            <person name="Wilming L."/>
            <person name="Wray P.W."/>
            <person name="Wu Z."/>
            <person name="Coulson A."/>
            <person name="Vaudin M."/>
            <person name="Sulston J.E."/>
            <person name="Durbin R.M."/>
            <person name="Hubbard T."/>
            <person name="Wooster R."/>
            <person name="Dunham I."/>
            <person name="Carter N.P."/>
            <person name="McVean G."/>
            <person name="Ross M.T."/>
            <person name="Harrow J."/>
            <person name="Olson M.V."/>
            <person name="Beck S."/>
            <person name="Rogers J."/>
            <person name="Bentley D.R."/>
        </authorList>
    </citation>
    <scope>NUCLEOTIDE SEQUENCE [LARGE SCALE GENOMIC DNA]</scope>
</reference>
<reference key="6">
    <citation type="submission" date="2005-09" db="EMBL/GenBank/DDBJ databases">
        <authorList>
            <person name="Mural R.J."/>
            <person name="Istrail S."/>
            <person name="Sutton G.G."/>
            <person name="Florea L."/>
            <person name="Halpern A.L."/>
            <person name="Mobarry C.M."/>
            <person name="Lippert R."/>
            <person name="Walenz B."/>
            <person name="Shatkay H."/>
            <person name="Dew I."/>
            <person name="Miller J.R."/>
            <person name="Flanigan M.J."/>
            <person name="Edwards N.J."/>
            <person name="Bolanos R."/>
            <person name="Fasulo D."/>
            <person name="Halldorsson B.V."/>
            <person name="Hannenhalli S."/>
            <person name="Turner R."/>
            <person name="Yooseph S."/>
            <person name="Lu F."/>
            <person name="Nusskern D.R."/>
            <person name="Shue B.C."/>
            <person name="Zheng X.H."/>
            <person name="Zhong F."/>
            <person name="Delcher A.L."/>
            <person name="Huson D.H."/>
            <person name="Kravitz S.A."/>
            <person name="Mouchard L."/>
            <person name="Reinert K."/>
            <person name="Remington K.A."/>
            <person name="Clark A.G."/>
            <person name="Waterman M.S."/>
            <person name="Eichler E.E."/>
            <person name="Adams M.D."/>
            <person name="Hunkapiller M.W."/>
            <person name="Myers E.W."/>
            <person name="Venter J.C."/>
        </authorList>
    </citation>
    <scope>NUCLEOTIDE SEQUENCE [LARGE SCALE GENOMIC DNA]</scope>
</reference>
<reference key="7">
    <citation type="journal article" date="2004" name="Genome Res.">
        <title>The status, quality, and expansion of the NIH full-length cDNA project: the Mammalian Gene Collection (MGC).</title>
        <authorList>
            <consortium name="The MGC Project Team"/>
        </authorList>
    </citation>
    <scope>NUCLEOTIDE SEQUENCE [LARGE SCALE MRNA] (ISOFORM ALPHA-3)</scope>
    <source>
        <tissue>Kidney</tissue>
    </source>
</reference>
<reference key="8">
    <citation type="submission" date="2005-11" db="PDB data bank">
        <title>Solution structure of the NUDIX domain from human A/G-specific adenine DNA glycosylase alpha-3 splice isoform.</title>
        <authorList>
            <consortium name="RIKEN structural genomics initiative (RSGI)"/>
        </authorList>
    </citation>
    <scope>STRUCTURE BY NMR OF 356-497</scope>
</reference>
<reference key="9">
    <citation type="journal article" date="2002" name="Nat. Genet.">
        <title>Inherited variants of MYH associated with somatic G:C--&gt;T:A mutations in colorectal tumors.</title>
        <authorList>
            <person name="Al-Tassan N."/>
            <person name="Chmiel N.H."/>
            <person name="Maynard J."/>
            <person name="Fleming N."/>
            <person name="Livingston A.L."/>
            <person name="Williams G.T."/>
            <person name="Hodges A.K."/>
            <person name="Davies D.R."/>
            <person name="David S.S."/>
            <person name="Sampson J.R."/>
            <person name="Cheadle J.P."/>
        </authorList>
    </citation>
    <scope>VARIANTS FAP2 CYS-176 AND ASP-393</scope>
</reference>
<reference key="10">
    <citation type="journal article" date="2003" name="Lancet">
        <title>Autosomal recessive colorectal adenomatous polyposis due to inherited mutations of MYH.</title>
        <authorList>
            <person name="Sampson J.R."/>
            <person name="Dolwani S."/>
            <person name="Jones S."/>
            <person name="Eccles D."/>
            <person name="Ellis A."/>
            <person name="Evans D.G."/>
            <person name="Frayling I."/>
            <person name="Jordan S."/>
            <person name="Maher E.R."/>
            <person name="Mak T."/>
            <person name="Maynard J."/>
            <person name="Pigatto F."/>
            <person name="Shaw J."/>
            <person name="Cheadle J.P."/>
        </authorList>
    </citation>
    <scope>VARIANTS FAP2 ARG-128; CYS-176 AND ASP-393</scope>
</reference>
<reference key="11">
    <citation type="journal article" date="2003" name="N. Engl. J. Med.">
        <title>Multiple colorectal adenomas, classic adenomatous polyposis, and germ-line mutations in MYH.</title>
        <authorList>
            <person name="Sieber O.M."/>
            <person name="Lipton L."/>
            <person name="Crabtree M."/>
            <person name="Heinimann K."/>
            <person name="Fidalgo P."/>
            <person name="Phillips R.K.S."/>
            <person name="Bisgaard M.-L."/>
            <person name="Orntoft T.F."/>
            <person name="Aaltonen L.A."/>
            <person name="Hodgson S.V."/>
            <person name="Thomas H.J.W."/>
            <person name="Tomlinson I.P.M."/>
        </authorList>
    </citation>
    <scope>VARIANTS FAP2 CYS-176 AND ASP-393</scope>
    <scope>VARIANTS MET-22; HIS-335 AND PHE-512</scope>
</reference>
<reference key="12">
    <citation type="journal article" date="2004" name="Hum. Mutat.">
        <title>Germline MUTYH (MYH) mutations in Portuguese individuals with multiple colorectal adenomas.</title>
        <authorList>
            <person name="Isidro G."/>
            <person name="Laranjeira F."/>
            <person name="Pires A."/>
            <person name="Leite J."/>
            <person name="Regateiro F."/>
            <person name="Castro e Sousa F."/>
            <person name="Soares J."/>
            <person name="Castro C."/>
            <person name="Giria J."/>
            <person name="Brito M.J."/>
            <person name="Medeira A."/>
            <person name="Teixeira R."/>
            <person name="Morna H."/>
            <person name="Gaspar I."/>
            <person name="Marinho C."/>
            <person name="Jorge R."/>
            <person name="Brehm A."/>
            <person name="Ramos J.S."/>
            <person name="Boavida M.G."/>
        </authorList>
    </citation>
    <scope>VARIANTS FAP2 HIS-125; HIS-179 AND TRP-238</scope>
</reference>
<reference key="13">
    <citation type="journal article" date="2004" name="Oncogene">
        <title>Genetic alterations of the MYH gene in gastric cancer.</title>
        <authorList>
            <person name="Kim C.J."/>
            <person name="Cho Y.G."/>
            <person name="Park C.H."/>
            <person name="Kim S.Y."/>
            <person name="Nam S.W."/>
            <person name="Lee S.H."/>
            <person name="Yoo N.J."/>
            <person name="Lee J.Y."/>
            <person name="Park W.S."/>
        </authorList>
    </citation>
    <scope>VARIANTS GASC SER-402 AND ARG-411</scope>
</reference>
<reference key="14">
    <citation type="journal article" date="2005" name="Hum. Mutat.">
        <title>Mutations of APC and MYH in unrelated Italian patients with adenomatous polyposis coli.</title>
        <authorList>
            <person name="Aceto G."/>
            <person name="Curia M.C."/>
            <person name="Veschi S."/>
            <person name="De Lellis L."/>
            <person name="Mammarella S."/>
            <person name="Catalano T."/>
            <person name="Stuppia L."/>
            <person name="Palka G."/>
            <person name="Valanzano R."/>
            <person name="Tonelli F."/>
            <person name="Casale V."/>
            <person name="Stigliano V."/>
            <person name="Cetta F."/>
            <person name="Battista P."/>
            <person name="Mariani-Costantini R."/>
            <person name="Cama A."/>
        </authorList>
    </citation>
    <scope>VARIANTS FAP2 CYS-176; HIS-242; TRP-271; PRO-385; ASP-393; CYS-423 AND GLU-477 DEL</scope>
    <scope>VARIANTS MET-22 AND HIS-335</scope>
</reference>
<reference key="15">
    <citation type="journal article" date="2006" name="Hum. Mutat.">
        <title>Low frequency of AXIN2 mutations and high frequency of MUTYH mutations in patients with multiple polyposis.</title>
        <authorList>
            <consortium name="PAFNORD Group"/>
            <person name="Lejeune S."/>
            <person name="Guillemot F."/>
            <person name="Triboulet J.P."/>
            <person name="Cattan S."/>
            <person name="Mouton C."/>
            <person name="Porchet N."/>
            <person name="Manouvrier S."/>
            <person name="Buisine M.P."/>
        </authorList>
    </citation>
    <scope>VARIANTS FAP2 CYS-176; SER-177; VAL-280; LEU-292; PRO-385 AND ASP-393</scope>
    <scope>VARIANTS MET-22; HIS-335 AND PHE-512</scope>
</reference>
<reference key="16">
    <citation type="journal article" date="2006" name="Int. J. Cancer">
        <title>Prevalence of MYH germline mutations in Swiss APC mutation-negative polyposis patients.</title>
        <authorList>
            <person name="Russell A.M."/>
            <person name="Zhang J."/>
            <person name="Luz J."/>
            <person name="Hutter P."/>
            <person name="Chappuis P.O."/>
            <person name="Berthod C.R."/>
            <person name="Maillet P."/>
            <person name="Mueller H."/>
            <person name="Heinimann K."/>
        </authorList>
    </citation>
    <scope>VARIANTS FAP2 ILE-TRP-148 INS; CYS-176; GLN-182; VAL-220; HIS-242 AND ASP-393</scope>
    <scope>VARIANTS MET-22 AND HIS-335</scope>
</reference>
<reference key="17">
    <citation type="journal article" date="2006" name="Int. J. Cancer">
        <title>MUTYH-associated polyposis: 70 of 71 patients with biallelic mutations present with an attenuated or atypical phenotype.</title>
        <authorList>
            <person name="Aretz S."/>
            <person name="Uhlhaas S."/>
            <person name="Goergens H."/>
            <person name="Siberg K."/>
            <person name="Vogel M."/>
            <person name="Pagenstecher C."/>
            <person name="Mangold E."/>
            <person name="Caspari R."/>
            <person name="Propping P."/>
            <person name="Friedl W."/>
        </authorList>
    </citation>
    <scope>VARIANTS FAP2 LEU-154; CYS-176; HIS-179; HIS-242; TRP-271; LEU-292; CYS-306; ASP-393; LEU-402; CYS-423; GLU-477 DEL AND PHE-490</scope>
</reference>
<reference key="18">
    <citation type="journal article" date="2007" name="Genet. Med.">
        <title>Heterogeneous molecular mechanisms underlie attenuated familial adenomatous polyposis.</title>
        <authorList>
            <person name="Cattaneo F."/>
            <person name="Molatore S."/>
            <person name="Mihalatos M."/>
            <person name="Apessos A."/>
            <person name="Venesio T."/>
            <person name="Bione S."/>
            <person name="Grignani P."/>
            <person name="Nasioulas G."/>
            <person name="Ranzani G.N."/>
        </authorList>
    </citation>
    <scope>VARIANTS FAP2 CYS-176; CYS-179; TRP-182 AND ASP-393</scope>
</reference>
<reference key="19">
    <citation type="journal article" date="2008" name="Gut">
        <title>Inherited predisposition to colorectal adenomas caused by multiple rare alleles of MUTYH but not OGG1, NUDT1, NTH1 or NEIL 1, 2 or 3.</title>
        <authorList>
            <person name="Dallosso A.R."/>
            <person name="Dolwani S."/>
            <person name="Jones N."/>
            <person name="Jones S."/>
            <person name="Colley J."/>
            <person name="Maynard J."/>
            <person name="Idziaszczyk S."/>
            <person name="Humphreys V."/>
            <person name="Arnold J."/>
            <person name="Donaldson A."/>
            <person name="Eccles D."/>
            <person name="Ellis A."/>
            <person name="Evans D.G."/>
            <person name="Frayling I.M."/>
            <person name="Hes F.J."/>
            <person name="Houlston R.S."/>
            <person name="Maher E.R."/>
            <person name="Nielsen M."/>
            <person name="Parry S."/>
            <person name="Tyler E."/>
            <person name="Moskvina V."/>
            <person name="Cheadle J.P."/>
            <person name="Sampson J.R."/>
        </authorList>
    </citation>
    <scope>VARIANTS FAP2 GLU-213; SER-235 AND MET-474</scope>
</reference>
<reference key="20">
    <citation type="journal article" date="2010" name="DNA Repair">
        <title>Functional analysis of MUTYH mutated proteins associated with familial adenomatous polyposis.</title>
        <authorList>
            <person name="D'Agostino V.G."/>
            <person name="Minoprio A."/>
            <person name="Torreri P."/>
            <person name="Marinoni I."/>
            <person name="Bossa C."/>
            <person name="Petrucci T.C."/>
            <person name="Albertini A.M."/>
            <person name="Ranzani G.N."/>
            <person name="Bignami M."/>
            <person name="Mazzei F."/>
        </authorList>
    </citation>
    <scope>CHARACTERIZATION OF VARIANTS FAP2 ILE-TRP-148 INS; CYS-176; TRP-182; ASP-393 AND GLU-477 DEL</scope>
    <scope>FUNCTION</scope>
    <scope>CATALYTIC ACTIVITY</scope>
</reference>
<reference key="21">
    <citation type="journal article" date="2010" name="Hum. Mutat.">
        <title>MUTYH mutations associated with familial adenomatous polyposis: functional characterization by a mammalian cell-based assay.</title>
        <authorList>
            <person name="Molatore S."/>
            <person name="Russo M.T."/>
            <person name="D'Agostino V.G."/>
            <person name="Barone F."/>
            <person name="Matsumoto Y."/>
            <person name="Albertini A.M."/>
            <person name="Minoprio A."/>
            <person name="Degan P."/>
            <person name="Mazzei F."/>
            <person name="Bignami M."/>
            <person name="Ranzani G.N."/>
        </authorList>
    </citation>
    <scope>VARIANTS FAP2 ILE-TRP-148 INS; TRP-182 AND GLU-477 DEL</scope>
    <scope>CHARACTERIZATION OF VARIANTS FAP2 ILE-TRP-148 INS; CYS-176; TRP-182; ASP-393 AND GLU-477 DEL</scope>
</reference>
<reference key="22">
    <citation type="journal article" date="2010" name="Hum. Mutat.">
        <title>Adenine DNA glycosylase activity of 14 human MutY homolog (MUTYH) variant proteins found in patients with colorectal polyposis and cancer.</title>
        <authorList>
            <person name="Goto M."/>
            <person name="Shinmura K."/>
            <person name="Nakabeppu Y."/>
            <person name="Tao H."/>
            <person name="Yamada H."/>
            <person name="Tsuneyoshi T."/>
            <person name="Sugimura H."/>
        </authorList>
    </citation>
    <scope>CHARACTERIZATION OF VARIANTS FAP2 CYS-176; HIS-179; VAL-220; VAL-280; CYS-306; PRO-385; ASP-393; LEU-402 AND GLU-477 DEL</scope>
    <scope>CHARACTERIZATION OF VARIANTS GLU-72; VAL-370 AND PHE-512</scope>
    <scope>FUNCTION</scope>
    <scope>MUTAGENESIS OF ASP-233</scope>
</reference>
<reference key="23">
    <citation type="journal article" date="2015" name="Hum. Mutat.">
        <title>Functional complementation assay for 47 MUTYH variants in a MutY-disrupted Escherichia coli strain.</title>
        <authorList>
            <person name="Komine K."/>
            <person name="Shimodaira H."/>
            <person name="Takao M."/>
            <person name="Soeda H."/>
            <person name="Zhang X."/>
            <person name="Takahashi M."/>
            <person name="Ishioka C."/>
        </authorList>
    </citation>
    <scope>CHARACTERIZATION OF VARIANTS FAP2 LEU-18; HIS-125; ARG-128; LEU-154; CYS-176; CYS-179; HIS-179; GLN-182; GLU-186; VAL-220; TRP-238; HIS-242; TRP-271; GLU-283; LEU-292; CYS-306; THR-377; PRO-385; ASP-393; LEU-402; MET-417; CYS-423; ASP-470; THR-470; GLU-477 DEL; THR-486 AND PHE-490</scope>
    <scope>CHARACTERIZATION OF VARIANTS GASC SER-402 AND ARG-411</scope>
    <scope>CHARACTERIZATION OF VARIANTS MET-22; ASP-25; ARG-100; ASN-102; VAL-224; MET-231; CYS-242; PHE-243; TRP-287; HIS-335; ARG-335; GLN-434; PRO-434; GLU-500; PHE-512; LEU-513; MET-526 AND GLN-531</scope>
    <scope>FUNCTION</scope>
    <scope>SUBCELLULAR LOCATION</scope>
</reference>
<reference key="24">
    <citation type="journal article" date="2016" name="Hum. Mutat.">
        <title>Functional evaluation of nine missense-type variants of the human DNA glycosylase enzyme MUTYH in the Japanese population.</title>
        <authorList>
            <person name="Shinmura K."/>
            <person name="Kato H."/>
            <person name="Goto M."/>
            <person name="Yamada H."/>
            <person name="Tao H."/>
            <person name="Nakamura S."/>
            <person name="Sugimura H."/>
        </authorList>
    </citation>
    <scope>CHARACTERIZATION OF VARIANT FAP2 SER-235</scope>
    <scope>CHARACTERIZATION OF VARIANTS ASN-102; MET-231; GLY-244; ASN-319; HIS-520 AND ALA-536</scope>
    <scope>FUNCTION</scope>
    <scope>MUTAGENESIS OF ASP-121</scope>
</reference>
<organism>
    <name type="scientific">Homo sapiens</name>
    <name type="common">Human</name>
    <dbReference type="NCBI Taxonomy" id="9606"/>
    <lineage>
        <taxon>Eukaryota</taxon>
        <taxon>Metazoa</taxon>
        <taxon>Chordata</taxon>
        <taxon>Craniata</taxon>
        <taxon>Vertebrata</taxon>
        <taxon>Euteleostomi</taxon>
        <taxon>Mammalia</taxon>
        <taxon>Eutheria</taxon>
        <taxon>Euarchontoglires</taxon>
        <taxon>Primates</taxon>
        <taxon>Haplorrhini</taxon>
        <taxon>Catarrhini</taxon>
        <taxon>Hominidae</taxon>
        <taxon>Homo</taxon>
    </lineage>
</organism>
<proteinExistence type="evidence at protein level"/>
<feature type="chain" id="PRO_0000102239" description="Adenine DNA glycosylase">
    <location>
        <begin position="1"/>
        <end position="546"/>
    </location>
</feature>
<feature type="domain" description="Nudix hydrolase" evidence="4">
    <location>
        <begin position="364"/>
        <end position="495"/>
    </location>
</feature>
<feature type="region of interest" description="Disordered" evidence="5">
    <location>
        <begin position="19"/>
        <end position="51"/>
    </location>
</feature>
<feature type="short sequence motif" description="Nudix box">
    <location>
        <begin position="404"/>
        <end position="426"/>
    </location>
</feature>
<feature type="active site" description="Proton donor/acceptor" evidence="2">
    <location>
        <position position="131"/>
    </location>
</feature>
<feature type="binding site" evidence="1">
    <location>
        <position position="287"/>
    </location>
    <ligand>
        <name>[4Fe-4S] cluster</name>
        <dbReference type="ChEBI" id="CHEBI:49883"/>
    </ligand>
</feature>
<feature type="binding site" evidence="1">
    <location>
        <position position="294"/>
    </location>
    <ligand>
        <name>[4Fe-4S] cluster</name>
        <dbReference type="ChEBI" id="CHEBI:49883"/>
    </ligand>
</feature>
<feature type="binding site" evidence="1">
    <location>
        <position position="297"/>
    </location>
    <ligand>
        <name>[4Fe-4S] cluster</name>
        <dbReference type="ChEBI" id="CHEBI:49883"/>
    </ligand>
</feature>
<feature type="binding site" evidence="1">
    <location>
        <position position="303"/>
    </location>
    <ligand>
        <name>[4Fe-4S] cluster</name>
        <dbReference type="ChEBI" id="CHEBI:49883"/>
    </ligand>
</feature>
<feature type="site" description="Transition state stabilizer" evidence="2">
    <location>
        <position position="233"/>
    </location>
</feature>
<feature type="splice variant" id="VSP_010548" description="In isoform Beta-1, isoform Gamma-2 and isoform Gamma-3." evidence="24">
    <location>
        <begin position="1"/>
        <end position="14"/>
    </location>
</feature>
<feature type="splice variant" id="VSP_010550" description="In isoform Alpha-3 and isoform Gamma-3." evidence="24 25">
    <location>
        <begin position="53"/>
        <end position="63"/>
    </location>
</feature>
<feature type="splice variant" id="VSP_010549" description="In isoform Alpha-2 and isoform Gamma-2." evidence="24">
    <location>
        <begin position="53"/>
        <end position="62"/>
    </location>
</feature>
<feature type="sequence variant" id="VAR_077640" description="In FAP2; uncertain significance; decreased function in DNA repair; dbSNP:rs79777494." evidence="21">
    <original>P</original>
    <variation>L</variation>
    <location>
        <position position="18"/>
    </location>
</feature>
<feature type="sequence variant" id="VAR_018872" description="Does not affect function in DNA repair; dbSNP:rs3219484." evidence="8 12 13 15 21 23">
    <original>V</original>
    <variation>M</variation>
    <location>
        <position position="22"/>
    </location>
</feature>
<feature type="sequence variant" id="VAR_077641" description="Does not affect function in DNA repair; dbSNP:rs75321043." evidence="21">
    <original>G</original>
    <variation>D</variation>
    <location>
        <position position="25"/>
    </location>
</feature>
<feature type="sequence variant" id="VAR_077642" description="Does not affect DNA glycosylase activity; dbSNP:rs1557487179." evidence="20">
    <original>V</original>
    <variation>E</variation>
    <location>
        <position position="72"/>
    </location>
</feature>
<feature type="sequence variant" id="VAR_077643" description="Found in sporadic hepatocellular carcinoma; uncertain significance; loss of function in DNA repair; dbSNP:rs1140507." evidence="21">
    <original>W</original>
    <variation>R</variation>
    <location>
        <position position="100"/>
    </location>
</feature>
<feature type="sequence variant" id="VAR_077644" description="Found in multiple polyposis and sporadic colorectal cancer cases; uncertain significance; does not affect DNA glycosylase activity; does not affect function in DNA repair; dbSNP:rs587780746." evidence="21 22">
    <original>D</original>
    <variation>N</variation>
    <location>
        <position position="102"/>
    </location>
</feature>
<feature type="sequence variant" id="VAR_026045" description="In FAP2; decreased function in DNA repair." evidence="11 21">
    <original>Y</original>
    <variation>H</variation>
    <location>
        <position position="125"/>
    </location>
</feature>
<feature type="sequence variant" id="VAR_026046" description="In FAP2; loss of function in DNA repair; dbSNP:rs730881832." evidence="9 21">
    <original>W</original>
    <variation>R</variation>
    <location>
        <position position="128"/>
    </location>
</feature>
<feature type="sequence variant" id="VAR_064938" description="In FAP2; reduced DNA glycosylase activity; decreased DNA binding; loss of function in DNA repair." evidence="13 18 19">
    <original>G</original>
    <variation>GIW</variation>
    <location>
        <position position="148"/>
    </location>
</feature>
<feature type="sequence variant" id="VAR_077646" description="In FAP2; decreased function in DNA repair; dbSNP:rs777184451." evidence="14 21">
    <original>P</original>
    <variation>L</variation>
    <location>
        <position position="154"/>
    </location>
</feature>
<feature type="sequence variant" id="VAR_018873" description="In FAP2; loss of DNA glycosylase activity; decreased DNA binding; loss of function in DNA repair; dbSNP:rs34612342." evidence="7 8 9 12 13 14 15 16 18 19 20 21">
    <original>Y</original>
    <variation>C</variation>
    <location>
        <position position="176"/>
    </location>
</feature>
<feature type="sequence variant" id="VAR_077647" description="In FAP2." evidence="15">
    <original>Y</original>
    <variation>S</variation>
    <location>
        <position position="177"/>
    </location>
</feature>
<feature type="sequence variant" id="VAR_064939" description="In FAP2; also found in multiple polyposis and colorectal cancer cases; loss of function in DNA repair; dbSNP:rs747993448." evidence="16 21">
    <original>R</original>
    <variation>C</variation>
    <location>
        <position position="179"/>
    </location>
</feature>
<feature type="sequence variant" id="VAR_026047" description="In FAP2; loss of DNA glycosylase activity; loss of function in DNA repair; dbSNP:rs143353451." evidence="11 14 20 21">
    <original>R</original>
    <variation>H</variation>
    <location>
        <position position="179"/>
    </location>
</feature>
<feature type="sequence variant" id="VAR_077648" description="In FAP2; loss of function in DNA repair; dbSNP:rs533899702." evidence="13 21">
    <original>R</original>
    <variation>Q</variation>
    <location>
        <position position="182"/>
    </location>
</feature>
<feature type="sequence variant" id="VAR_064940" description="In FAP2; loss of DNA glycosylase activity; loss of DNA binding; loss of function in DNA repair; dbSNP:rs750592289." evidence="16 18 19">
    <original>R</original>
    <variation>W</variation>
    <location>
        <position position="182"/>
    </location>
</feature>
<feature type="sequence variant" id="VAR_077649" description="In FAP2; decreased function in DNA repair; dbSNP:rs754155145." evidence="21">
    <original>G</original>
    <variation>E</variation>
    <location>
        <position position="186"/>
    </location>
</feature>
<feature type="sequence variant" id="VAR_077650" description="In FAP2; dbSNP:rs768553551." evidence="17">
    <original>G</original>
    <variation>E</variation>
    <location>
        <position position="213"/>
    </location>
</feature>
<feature type="sequence variant" id="VAR_077651" description="In FAP2; uncertain significance; reduced DNA glycosylase activity; no effect on function in DNA repair; dbSNP:rs200872702." evidence="13 20 21">
    <original>I</original>
    <variation>V</variation>
    <location>
        <position position="220"/>
    </location>
</feature>
<feature type="sequence variant" id="VAR_077652" description="Decreased function in DNA repair; dbSNP:rs11545695." evidence="21">
    <original>A</original>
    <variation>V</variation>
    <location>
        <position position="224"/>
    </location>
</feature>
<feature type="sequence variant" id="VAR_077653" description="Found in familial colorectal cancer; likely pathogenic; no significant effect on DNA glycosylase activity; slightly decreased function in DNA repair; dbSNP:rs200165598." evidence="21 22">
    <original>V</original>
    <variation>M</variation>
    <location>
        <position position="231"/>
    </location>
</feature>
<feature type="sequence variant" id="VAR_077654" description="In FAP2; loss of DNA glycosylase activity; loss of function in DNA repair; dbSNP:rs1057517765." evidence="17 22">
    <original>N</original>
    <variation>S</variation>
    <location>
        <position position="235"/>
    </location>
</feature>
<feature type="sequence variant" id="VAR_026048" description="In FAP2; uncertain significance; decreased function in DNA repair; dbSNP:rs34126013." evidence="11 21">
    <original>R</original>
    <variation>W</variation>
    <location>
        <position position="238"/>
    </location>
</feature>
<feature type="sequence variant" id="VAR_077655" description="Found in colorectal polyposis; likely pathogenic; decreased function in DNA repair; dbSNP:rs200495564." evidence="21">
    <original>R</original>
    <variation>C</variation>
    <location>
        <position position="242"/>
    </location>
</feature>
<feature type="sequence variant" id="VAR_077656" description="In FAP2; loss of function in DNA repair; dbSNP:rs140342925." evidence="12 13 14 21">
    <original>R</original>
    <variation>H</variation>
    <location>
        <position position="242"/>
    </location>
</feature>
<feature type="sequence variant" id="VAR_077657" description="Does not affect function; dbSNP:rs587780749." evidence="21">
    <original>V</original>
    <variation>F</variation>
    <location>
        <position position="243"/>
    </location>
</feature>
<feature type="sequence variant" id="VAR_077658" description="Reduced DNA glycosylase activity; decreased function in DNA repair; dbSNP:rs587782885." evidence="22">
    <original>R</original>
    <variation>G</variation>
    <location>
        <position position="244"/>
    </location>
</feature>
<feature type="sequence variant" id="VAR_077659" description="In FAP2; loss of function in DNA repair; dbSNP:rs769237459." evidence="12 14 21">
    <original>R</original>
    <variation>W</variation>
    <location>
        <position position="271"/>
    </location>
</feature>
<feature type="sequence variant" id="VAR_077660" description="In FAP2; reduced DNA glycosylase activity; dbSNP:rs876659676." evidence="15 20">
    <original>M</original>
    <variation>V</variation>
    <location>
        <position position="280"/>
    </location>
</feature>
<feature type="sequence variant" id="VAR_077661" description="In FAP2; uncertain significance; does not affect function in DNA repair; dbSNP:rs730881833." evidence="21">
    <original>G</original>
    <variation>E</variation>
    <location>
        <position position="283"/>
    </location>
</feature>
<feature type="sequence variant" id="VAR_077662" description="Found in a case of sporadic lung cancer; uncertain significance; loss of function in DNA repair." evidence="21">
    <original>C</original>
    <variation>W</variation>
    <location>
        <position position="287"/>
    </location>
</feature>
<feature type="sequence variant" id="VAR_077663" description="In FAP2; also found in multiple polyposis cases; loss of function in DNA repair; dbSNP:rs374950566." evidence="14 15 21">
    <original>P</original>
    <variation>L</variation>
    <location>
        <position position="292"/>
    </location>
</feature>
<feature type="sequence variant" id="VAR_077664" description="In FAP2; uncertain significance; does not affect DNA glycosylase activity; slightly decreased function in DNA repair; dbSNP:rs138089183." evidence="14 20 21">
    <original>R</original>
    <variation>C</variation>
    <location>
        <position position="306"/>
    </location>
</feature>
<feature type="sequence variant" id="VAR_077665" description="Does not affect DNA glycosylase activity; does not affect function in DNA repair; dbSNP:rs587781810." evidence="22">
    <original>S</original>
    <variation>N</variation>
    <location>
        <position position="319"/>
    </location>
</feature>
<feature type="sequence variant" id="VAR_018874" description="Does not affect function in DNA repair; dbSNP:rs3219489." evidence="8 12 13 15 21 23">
    <original>Q</original>
    <variation>H</variation>
    <location>
        <position position="335"/>
    </location>
</feature>
<feature type="sequence variant" id="VAR_077666" description="Found in a family with non-polyposis colorectal cancer-like syndrome; uncertain significance; does not affect function in DNA repair; dbSNP:rs199742231." evidence="21">
    <original>Q</original>
    <variation>R</variation>
    <location>
        <position position="335"/>
    </location>
</feature>
<feature type="sequence variant" id="VAR_048262" description="Does not affect DNA glycosylase activity; dbSNP:rs35352891." evidence="20">
    <original>A</original>
    <variation>V</variation>
    <location>
        <position position="370"/>
    </location>
</feature>
<feature type="sequence variant" id="VAR_077667" description="In FAP2; decreased function in DNA repair." evidence="21">
    <original>P</original>
    <variation>T</variation>
    <location>
        <position position="377"/>
    </location>
</feature>
<feature type="sequence variant" id="VAR_077668" description="In FAP2; also found in multiple polyposis cases; loss of DNA glycosylase activity; loss of function in DNA repair; dbSNP:rs1060501335." evidence="12 15 20 21">
    <original>L</original>
    <variation>P</variation>
    <location>
        <position position="385"/>
    </location>
</feature>
<feature type="sequence variant" id="VAR_018875" description="In FAP2; reduced DNA glycosylase activity; decreased DNA binding; decreased function in DNA repair; dbSNP:rs36053993." evidence="7 8 9 12 13 14 15 16 18 19 20 21">
    <original>G</original>
    <variation>D</variation>
    <location>
        <position position="393"/>
    </location>
</feature>
<feature type="sequence variant" id="VAR_077669" description="In FAP2; also found in multiple polyposis and colorectal cancer cases; loss of DNA glycosylase activity; loss of function in DNA repair; dbSNP:rs529008617." evidence="14 20 21">
    <original>P</original>
    <variation>L</variation>
    <location>
        <position position="402"/>
    </location>
</feature>
<feature type="sequence variant" id="VAR_026049" description="In GASC; sporadic; decreased function in DNA repair; dbSNP:rs121908382." evidence="10 21">
    <original>P</original>
    <variation>S</variation>
    <location>
        <position position="402"/>
    </location>
</feature>
<feature type="sequence variant" id="VAR_026050" description="In GASC; uncertain significance; does not affect function in DNA repair; dbSNP:rs121908383." evidence="10 21">
    <original>Q</original>
    <variation>R</variation>
    <location>
        <position position="411"/>
    </location>
</feature>
<feature type="sequence variant" id="VAR_077670" description="In FAP2; uncertain significance; also found in a family with non-polyposis colorectal cancer-like syndrome; uncertain significance; does not affect function in DNA repair; dbSNP:rs144079536." evidence="21">
    <original>L</original>
    <variation>M</variation>
    <location>
        <position position="417"/>
    </location>
</feature>
<feature type="sequence variant" id="VAR_077671" description="In FAP2; uncertain significance; does not affect function in DNA repair; dbSNP:rs150792276." evidence="12 14 21">
    <original>R</original>
    <variation>C</variation>
    <location>
        <position position="423"/>
    </location>
</feature>
<feature type="sequence variant" id="VAR_077672" description="Found in sporadic colorectal cancer cases; uncertain significance; decreased function in DNA repair." evidence="21">
    <original>R</original>
    <variation>P</variation>
    <location>
        <position position="434"/>
    </location>
</feature>
<feature type="sequence variant" id="VAR_077673" description="Does not affect function in DNA repair; dbSNP:rs587782120." evidence="21">
    <original>R</original>
    <variation>Q</variation>
    <location>
        <position position="434"/>
    </location>
</feature>
<feature type="sequence variant" id="VAR_077674" description="In FAP2; loss of function in DNA repair; dbSNP:rs200844166." evidence="21">
    <original>A</original>
    <variation>D</variation>
    <location>
        <position position="470"/>
    </location>
</feature>
<feature type="sequence variant" id="VAR_077675" description="Found in patient with multiple polyposis; uncertain significance; does not affect function in DNA repair; dbSNP:rs192816572." evidence="21">
    <original>A</original>
    <variation>T</variation>
    <location>
        <position position="470"/>
    </location>
</feature>
<feature type="sequence variant" id="VAR_077676" description="In FAP2; uncertain significance; dbSNP:rs767747402." evidence="17">
    <original>T</original>
    <variation>M</variation>
    <location>
        <position position="474"/>
    </location>
</feature>
<feature type="sequence variant" id="VAR_064941" description="In FAP2; also found in a case of sporadic colorectal cancer; loss of DNA glycosylase activity; loss of DNA binding; loss of function in DNA repair." evidence="12 14 18 19 20 21">
    <location>
        <position position="477"/>
    </location>
</feature>
<feature type="sequence variant" id="VAR_077677" description="In FAP2; decreased function in DNA repair; dbSNP:rs587782263." evidence="21">
    <original>A</original>
    <variation>T</variation>
    <location>
        <position position="486"/>
    </location>
</feature>
<feature type="sequence variant" id="VAR_077678" description="In FAP2; uncertain significance; decreased function in DNA repair; dbSNP:rs587782228." evidence="14 21">
    <original>V</original>
    <variation>F</variation>
    <location>
        <position position="490"/>
    </location>
</feature>
<feature type="sequence variant" id="VAR_018876" description="Decreased function in DNA repair; dbSNP:rs3219494." evidence="21 23">
    <original>G</original>
    <variation>E</variation>
    <location>
        <position position="500"/>
    </location>
</feature>
<feature type="sequence variant" id="VAR_026051" description="Does not affect DNA glycosylase activity; does not affect function in DNA repair; dbSNP:rs140118273." evidence="8 15 20 21">
    <original>S</original>
    <variation>F</variation>
    <location>
        <position position="512"/>
    </location>
</feature>
<feature type="sequence variant" id="VAR_077679" description="Does not affect function in DNA repair; dbSNP:rs587778542." evidence="21">
    <original>P</original>
    <variation>L</variation>
    <location>
        <position position="513"/>
    </location>
</feature>
<feature type="sequence variant" id="VAR_077680" description="Does not affect DNA glycosylase activity; does not affect function in DNA repair; dbSNP:rs374655042." evidence="22">
    <original>R</original>
    <variation>H</variation>
    <location>
        <position position="520"/>
    </location>
</feature>
<feature type="sequence variant" id="VAR_018877" description="Does not affect function in DNA repair; dbSNP:rs3219496." evidence="21 23">
    <original>L</original>
    <variation>M</variation>
    <location>
        <position position="526"/>
    </location>
</feature>
<feature type="sequence variant" id="VAR_018878" description="Does not affect function in DNA repair; dbSNP:rs3219497." evidence="21 23">
    <original>R</original>
    <variation>Q</variation>
    <location>
        <position position="531"/>
    </location>
</feature>
<feature type="sequence variant" id="VAR_077681" description="Does not affect DNA glycosylase activity; does not affect function in DNA repair; dbSNP:rs151196169." evidence="22">
    <original>T</original>
    <variation>A</variation>
    <location>
        <position position="536"/>
    </location>
</feature>
<feature type="mutagenesis site" description="Does not affect DNA glycosylase activity. Does not affect function in DNA repair." evidence="22">
    <original>D</original>
    <variation>G</variation>
    <location>
        <position position="121"/>
    </location>
</feature>
<feature type="mutagenesis site" description="Loss of DNA glycosylase activity." evidence="20">
    <original>D</original>
    <variation>N</variation>
    <location>
        <position position="233"/>
    </location>
</feature>
<feature type="helix" evidence="29">
    <location>
        <begin position="87"/>
        <end position="104"/>
    </location>
</feature>
<feature type="helix" evidence="29">
    <location>
        <begin position="109"/>
        <end position="116"/>
    </location>
</feature>
<feature type="helix" evidence="29">
    <location>
        <begin position="120"/>
        <end position="134"/>
    </location>
</feature>
<feature type="helix" evidence="29">
    <location>
        <begin position="139"/>
        <end position="142"/>
    </location>
</feature>
<feature type="turn" evidence="29">
    <location>
        <begin position="143"/>
        <end position="145"/>
    </location>
</feature>
<feature type="helix" evidence="29">
    <location>
        <begin position="146"/>
        <end position="152"/>
    </location>
</feature>
<feature type="helix" evidence="29">
    <location>
        <begin position="156"/>
        <end position="161"/>
    </location>
</feature>
<feature type="helix" evidence="29">
    <location>
        <begin position="164"/>
        <end position="171"/>
    </location>
</feature>
<feature type="helix" evidence="29">
    <location>
        <begin position="178"/>
        <end position="193"/>
    </location>
</feature>
<feature type="helix" evidence="29">
    <location>
        <begin position="202"/>
        <end position="208"/>
    </location>
</feature>
<feature type="helix" evidence="29">
    <location>
        <begin position="214"/>
        <end position="225"/>
    </location>
</feature>
<feature type="helix" evidence="29">
    <location>
        <begin position="234"/>
        <end position="243"/>
    </location>
</feature>
<feature type="helix" evidence="29">
    <location>
        <begin position="253"/>
        <end position="266"/>
    </location>
</feature>
<feature type="strand" evidence="29">
    <location>
        <begin position="269"/>
        <end position="271"/>
    </location>
</feature>
<feature type="helix" evidence="29">
    <location>
        <begin position="272"/>
        <end position="285"/>
    </location>
</feature>
<feature type="strand" evidence="29">
    <location>
        <begin position="289"/>
        <end position="291"/>
    </location>
</feature>
<feature type="helix" evidence="29">
    <location>
        <begin position="294"/>
        <end position="296"/>
    </location>
</feature>
<feature type="helix" evidence="29">
    <location>
        <begin position="300"/>
        <end position="302"/>
    </location>
</feature>
<feature type="helix" evidence="29">
    <location>
        <begin position="304"/>
        <end position="314"/>
    </location>
</feature>
<feature type="helix" evidence="28">
    <location>
        <begin position="330"/>
        <end position="332"/>
    </location>
</feature>
<feature type="helix" evidence="29">
    <location>
        <begin position="348"/>
        <end position="354"/>
    </location>
</feature>
<feature type="strand" evidence="27">
    <location>
        <begin position="358"/>
        <end position="360"/>
    </location>
</feature>
<feature type="strand" evidence="29">
    <location>
        <begin position="365"/>
        <end position="376"/>
    </location>
</feature>
<feature type="strand" evidence="29">
    <location>
        <begin position="383"/>
        <end position="388"/>
    </location>
</feature>
<feature type="strand" evidence="29">
    <location>
        <begin position="391"/>
        <end position="393"/>
    </location>
</feature>
<feature type="turn" evidence="29">
    <location>
        <begin position="394"/>
        <end position="397"/>
    </location>
</feature>
<feature type="strand" evidence="29">
    <location>
        <begin position="403"/>
        <end position="405"/>
    </location>
</feature>
<feature type="helix" evidence="29">
    <location>
        <begin position="410"/>
        <end position="425"/>
    </location>
</feature>
<feature type="helix" evidence="29">
    <location>
        <begin position="430"/>
        <end position="432"/>
    </location>
</feature>
<feature type="strand" evidence="29">
    <location>
        <begin position="434"/>
        <end position="442"/>
    </location>
</feature>
<feature type="strand" evidence="29">
    <location>
        <begin position="444"/>
        <end position="456"/>
    </location>
</feature>
<feature type="strand" evidence="29">
    <location>
        <begin position="470"/>
        <end position="474"/>
    </location>
</feature>
<feature type="helix" evidence="29">
    <location>
        <begin position="475"/>
        <end position="479"/>
    </location>
</feature>
<feature type="strand" evidence="29">
    <location>
        <begin position="481"/>
        <end position="483"/>
    </location>
</feature>
<feature type="helix" evidence="29">
    <location>
        <begin position="485"/>
        <end position="497"/>
    </location>
</feature>
<sequence>MTPLVSRLSRLWAIMRKPRAAVGSGHRKQAASQEGRQKHAKNNSQAKPSACDGMIAECPGAPAGLARQPEEVVLQASVSSYHLFRDVAEVTAFRGSLLSWYDQEKRDLPWRRRAEDEMDLDRRAYAVWVSEVMLQQTQVATVINYYTGWMQKWPTLQDLASASLEEVNQLWAGLGYYSRGRRLQEGARKVVEELGGHMPRTAETLQQLLPGVGRYTAGAIASIAFGQATGVVDGNVARVLCRVRAIGADPSSTLVSQQLWGLAQQLVDPARPGDFNQAAMELGATVCTPQRPLCSQCPVESLCRARQRVEQEQLLASGSLSGSPDVEECAPNTGQCHLCLPPSEPWDQTLGVVNFPRKASRKPPREESSATCVLEQPGALGAQILLVQRPNSGLLAGLWEFPSVTWEPSEQLQRKALLQELQRWAGPLPATHLRHLGEVVHTFSHIKLTYQVYGLALEGQTPVTTVPPGARWLTQEEFHTAAVSTAMKKVFRVYQGQQPGTCMGSKRSQVSSPCSRKKPRMGQQVLDNFFRSHISTDAHSLNSAAQ</sequence>